<protein>
    <recommendedName>
        <fullName evidence="3">Lantibiotic flavucin</fullName>
    </recommendedName>
</protein>
<reference key="1">
    <citation type="submission" date="2009-01" db="EMBL/GenBank/DDBJ databases">
        <authorList>
            <person name="Qin X."/>
            <person name="Bachman B."/>
            <person name="Battles P."/>
            <person name="Bell A."/>
            <person name="Bess C."/>
            <person name="Bickham C."/>
            <person name="Chaboub L."/>
            <person name="Chen D."/>
            <person name="Coyle M."/>
            <person name="Deiros D.R."/>
            <person name="Dinh H."/>
            <person name="Forbes L."/>
            <person name="Fowler G."/>
            <person name="Francisco L."/>
            <person name="Fu Q."/>
            <person name="Gubbala S."/>
            <person name="Hale W."/>
            <person name="Han Y."/>
            <person name="Hemphill L."/>
            <person name="Highlander S.K."/>
            <person name="Hirani K."/>
            <person name="Hogues M."/>
            <person name="Jackson L."/>
            <person name="Jakkamsetti A."/>
            <person name="Javaid M."/>
            <person name="Jiang H."/>
            <person name="Korchina V."/>
            <person name="Kovar C."/>
            <person name="Lara F."/>
            <person name="Lee S."/>
            <person name="Mata R."/>
            <person name="Mathew T."/>
            <person name="Moen C."/>
            <person name="Morales K."/>
            <person name="Munidasa M."/>
            <person name="Nazareth L."/>
            <person name="Ngo R."/>
            <person name="Nguyen L."/>
            <person name="Okwuonu G."/>
            <person name="Ongeri F."/>
            <person name="Patil S."/>
            <person name="Petrosino J."/>
            <person name="Pham C."/>
            <person name="Pham P."/>
            <person name="Pu L.-L."/>
            <person name="Puazo M."/>
            <person name="Raj R."/>
            <person name="Reid J."/>
            <person name="Rouhana J."/>
            <person name="Saada N."/>
            <person name="Shang Y."/>
            <person name="Simmons D."/>
            <person name="Thornton R."/>
            <person name="Warren J."/>
            <person name="Weissenberger G."/>
            <person name="Zhang J."/>
            <person name="Zhang L."/>
            <person name="Zhou C."/>
            <person name="Zhu D."/>
            <person name="Muzny D."/>
            <person name="Worley K."/>
            <person name="Gibbs R."/>
        </authorList>
    </citation>
    <scope>NUCLEOTIDE SEQUENCE [LARGE SCALE GENOMIC DNA]</scope>
    <source>
        <strain>ATCC 700352 / DSM 44291 / CCUG 37336 / JCM 10383 / DMMZ 1944</strain>
    </source>
</reference>
<reference key="2">
    <citation type="journal article" date="2016" name="ACS Synth. Biol.">
        <title>Discovery, production and modification of five novel lantibiotics using the promiscuous nisin modification machinery.</title>
        <authorList>
            <person name="van Heel A.J."/>
            <person name="Kloosterman T.G."/>
            <person name="Montalban-Lopez M."/>
            <person name="Deng J."/>
            <person name="Plat A."/>
            <person name="Baudu B."/>
            <person name="Hendriks D."/>
            <person name="Moll G.N."/>
            <person name="Kuipers O.P."/>
        </authorList>
    </citation>
    <scope>FUNCTION AS AN ANTIMICROBIAL PEPTIDE</scope>
    <scope>EXPRESSION IN L.LACTIS</scope>
    <scope>MASS SPECTROMETRY</scope>
    <scope>ACTIVITY REGULATION</scope>
    <source>
        <strain>ATCC 700352 / DSM 44291 / CCUG 37336 / JCM 10383 / DMMZ 1944</strain>
    </source>
</reference>
<gene>
    <name evidence="3" type="primary">flaA</name>
    <name evidence="5" type="ORF">HMPREF0298_1795</name>
</gene>
<sequence>MSDFTLDFAEGDAADTVSPQITSKSLCTPGCITGWMMCNTVTKGCSFTIGK</sequence>
<proteinExistence type="evidence at protein level"/>
<comment type="function">
    <text evidence="1 2">Lanthionine-containing peptide antibiotic (lantibiotic) active on certain Gram-positive bacteria. The bactericidal activity of lantibiotics is based on depolarization of energized bacterial cytoplasmic membranes, initiated by the formation of aqueous transmembrane pores (By similarity). Flavucin has high antimicrobial activity against several pathogenic bacteria such as S.aureus, E.faecalis, E.faecium and L.monocytogenes. Is also active against the Gram-negative P.aeruginosa (PubMed:27294279).</text>
</comment>
<comment type="activity regulation">
    <text evidence="2">Antimicrobial activity depends on the dehydration degree and integrity of flavucin.</text>
</comment>
<comment type="PTM">
    <text evidence="1">Maturation of lantibiotics involves the enzymatic conversion of Thr, and Ser into dehydrated AA and the formation of thioether bonds with cysteine. This is followed by membrane translocation and cleavage of the modified precursor.</text>
</comment>
<comment type="miscellaneous">
    <text evidence="2">A heterologous expression system was used to produce flavucin. The gene has been fused to the leader peptide gene sequence of the model lantibiotic nisin. The construct was plugged into the nisin expression and modification machinery, and produced in L.lactis. Growth conditions that yield detectable antimicrobial activity in C.lipophiloflavum could not be identified.</text>
</comment>
<comment type="similarity">
    <text evidence="3">Belongs to the type A lantibiotic family.</text>
</comment>
<organism>
    <name type="scientific">Corynebacterium lipophiloflavum (strain ATCC 700352 / DSM 44291 / CCUG 37336 / JCM 10383 / DMMZ 1944)</name>
    <dbReference type="NCBI Taxonomy" id="525263"/>
    <lineage>
        <taxon>Bacteria</taxon>
        <taxon>Bacillati</taxon>
        <taxon>Actinomycetota</taxon>
        <taxon>Actinomycetes</taxon>
        <taxon>Mycobacteriales</taxon>
        <taxon>Corynebacteriaceae</taxon>
        <taxon>Corynebacterium</taxon>
    </lineage>
</organism>
<dbReference type="EMBL" id="ACHJ01000147">
    <property type="protein sequence ID" value="EEI16401.1"/>
    <property type="molecule type" value="Genomic_DNA"/>
</dbReference>
<dbReference type="RefSeq" id="WP_006839087.1">
    <property type="nucleotide sequence ID" value="NZ_GG667191.1"/>
</dbReference>
<dbReference type="SMR" id="C0XTM5"/>
<dbReference type="HOGENOM" id="CLU_211937_0_0_11"/>
<dbReference type="Proteomes" id="UP000006196">
    <property type="component" value="Unassembled WGS sequence"/>
</dbReference>
<dbReference type="GO" id="GO:0005576">
    <property type="term" value="C:extracellular region"/>
    <property type="evidence" value="ECO:0007669"/>
    <property type="project" value="InterPro"/>
</dbReference>
<dbReference type="GO" id="GO:0005102">
    <property type="term" value="F:signaling receptor binding"/>
    <property type="evidence" value="ECO:0007669"/>
    <property type="project" value="UniProtKB-KW"/>
</dbReference>
<dbReference type="GO" id="GO:0042742">
    <property type="term" value="P:defense response to bacterium"/>
    <property type="evidence" value="ECO:0007669"/>
    <property type="project" value="UniProtKB-KW"/>
</dbReference>
<dbReference type="GO" id="GO:0031640">
    <property type="term" value="P:killing of cells of another organism"/>
    <property type="evidence" value="ECO:0007669"/>
    <property type="project" value="UniProtKB-KW"/>
</dbReference>
<dbReference type="InterPro" id="IPR006079">
    <property type="entry name" value="Lantibiotic_typ-A_Bacillales"/>
</dbReference>
<dbReference type="NCBIfam" id="TIGR03731">
    <property type="entry name" value="lantibio_gallid"/>
    <property type="match status" value="1"/>
</dbReference>
<dbReference type="Pfam" id="PF02052">
    <property type="entry name" value="Gallidermin"/>
    <property type="match status" value="1"/>
</dbReference>
<accession>C0XTM5</accession>
<keyword id="KW-0044">Antibiotic</keyword>
<keyword id="KW-0929">Antimicrobial</keyword>
<keyword id="KW-0078">Bacteriocin</keyword>
<keyword id="KW-0425">Lantibiotic</keyword>
<keyword id="KW-0883">Thioether bond</keyword>
<name>FLAA_CORLD</name>
<evidence type="ECO:0000250" key="1">
    <source>
        <dbReference type="UniProtKB" id="P10946"/>
    </source>
</evidence>
<evidence type="ECO:0000269" key="2">
    <source>
    </source>
</evidence>
<evidence type="ECO:0000305" key="3"/>
<evidence type="ECO:0000305" key="4">
    <source>
    </source>
</evidence>
<evidence type="ECO:0000312" key="5">
    <source>
        <dbReference type="EMBL" id="EEI16401.1"/>
    </source>
</evidence>
<feature type="propeptide" id="PRO_0000441864" evidence="4">
    <location>
        <begin position="1"/>
        <end position="20"/>
    </location>
</feature>
<feature type="peptide" id="PRO_0000441865" description="Lantibiotic flavucin">
    <location>
        <begin position="21"/>
        <end position="51"/>
    </location>
</feature>
<feature type="cross-link" description="Lanthionine (Ser-Cys)" evidence="1">
    <location>
        <begin position="23"/>
        <end position="27"/>
    </location>
</feature>
<feature type="cross-link" description="Beta-methyllanthionine (Thr-Cys)" evidence="1">
    <location>
        <begin position="28"/>
        <end position="31"/>
    </location>
</feature>
<feature type="cross-link" description="Beta-methyllanthionine (Thr-Cys)" evidence="1">
    <location>
        <begin position="33"/>
        <end position="38"/>
    </location>
</feature>
<feature type="cross-link" description="Beta-methyllanthionine (Thr-Cys)" evidence="1">
    <location>
        <begin position="42"/>
        <end position="45"/>
    </location>
</feature>